<accession>O42930</accession>
<organism>
    <name type="scientific">Schizosaccharomyces pombe (strain 972 / ATCC 24843)</name>
    <name type="common">Fission yeast</name>
    <dbReference type="NCBI Taxonomy" id="284812"/>
    <lineage>
        <taxon>Eukaryota</taxon>
        <taxon>Fungi</taxon>
        <taxon>Dikarya</taxon>
        <taxon>Ascomycota</taxon>
        <taxon>Taphrinomycotina</taxon>
        <taxon>Schizosaccharomycetes</taxon>
        <taxon>Schizosaccharomycetales</taxon>
        <taxon>Schizosaccharomycetaceae</taxon>
        <taxon>Schizosaccharomyces</taxon>
    </lineage>
</organism>
<gene>
    <name type="primary">vps10</name>
    <name type="synonym">pep1</name>
    <name type="ORF">SPBC16C6.06</name>
</gene>
<feature type="signal peptide" evidence="2">
    <location>
        <begin position="1"/>
        <end position="33"/>
    </location>
</feature>
<feature type="chain" id="PRO_0000316211" description="Vacuolar protein sorting/targeting protein 10">
    <location>
        <begin position="34"/>
        <end position="1466"/>
    </location>
</feature>
<feature type="topological domain" description="Lumenal" evidence="2">
    <location>
        <begin position="34"/>
        <end position="1363"/>
    </location>
</feature>
<feature type="transmembrane region" description="Helical" evidence="2">
    <location>
        <begin position="1364"/>
        <end position="1384"/>
    </location>
</feature>
<feature type="topological domain" description="Cytoplasmic" evidence="2">
    <location>
        <begin position="1385"/>
        <end position="1466"/>
    </location>
</feature>
<feature type="repeat" description="BNR 1">
    <location>
        <begin position="71"/>
        <end position="82"/>
    </location>
</feature>
<feature type="repeat" description="BNR 2">
    <location>
        <begin position="115"/>
        <end position="126"/>
    </location>
</feature>
<feature type="repeat" description="BNR 3">
    <location>
        <begin position="388"/>
        <end position="399"/>
    </location>
</feature>
<feature type="repeat" description="BNR 4">
    <location>
        <begin position="457"/>
        <end position="468"/>
    </location>
</feature>
<feature type="repeat" description="BNR 5">
    <location>
        <begin position="498"/>
        <end position="509"/>
    </location>
</feature>
<feature type="repeat" description="BNR 6">
    <location>
        <begin position="738"/>
        <end position="749"/>
    </location>
</feature>
<feature type="repeat" description="BNR 7">
    <location>
        <begin position="778"/>
        <end position="789"/>
    </location>
</feature>
<feature type="repeat" description="BNR 8">
    <location>
        <begin position="836"/>
        <end position="847"/>
    </location>
</feature>
<feature type="repeat" description="BNR 9">
    <location>
        <begin position="1039"/>
        <end position="1050"/>
    </location>
</feature>
<feature type="repeat" description="BNR 10">
    <location>
        <begin position="1112"/>
        <end position="1123"/>
    </location>
</feature>
<feature type="repeat" description="BNR 11">
    <location>
        <begin position="1153"/>
        <end position="1164"/>
    </location>
</feature>
<feature type="glycosylation site" description="N-linked (GlcNAc...) asparagine" evidence="2">
    <location>
        <position position="465"/>
    </location>
</feature>
<feature type="glycosylation site" description="N-linked (GlcNAc...) asparagine" evidence="2">
    <location>
        <position position="545"/>
    </location>
</feature>
<feature type="glycosylation site" description="N-linked (GlcNAc...) asparagine" evidence="2">
    <location>
        <position position="986"/>
    </location>
</feature>
<feature type="mutagenesis site" description="No cpy1 secretion; localizes to Golgi and vacuolar membrane." evidence="3">
    <original>F</original>
    <variation>A</variation>
    <location>
        <position position="1419"/>
    </location>
</feature>
<feature type="mutagenesis site" description="No cpy1 secretion; localizes to Golgi and vacuolar membrane.">
    <original>FF</original>
    <variation>AA</variation>
    <location>
        <begin position="1425"/>
        <end position="1426"/>
    </location>
</feature>
<feature type="mutagenesis site" description="No cpy1 secretion." evidence="3">
    <original>F</original>
    <variation>A</variation>
    <location>
        <position position="1425"/>
    </location>
</feature>
<feature type="mutagenesis site" description="No cpy1 secretion." evidence="3">
    <original>F</original>
    <variation>A</variation>
    <location>
        <position position="1426"/>
    </location>
</feature>
<proteinExistence type="evidence at protein level"/>
<keyword id="KW-0325">Glycoprotein</keyword>
<keyword id="KW-0333">Golgi apparatus</keyword>
<keyword id="KW-0472">Membrane</keyword>
<keyword id="KW-0547">Nucleotide-binding</keyword>
<keyword id="KW-0653">Protein transport</keyword>
<keyword id="KW-0675">Receptor</keyword>
<keyword id="KW-1185">Reference proteome</keyword>
<keyword id="KW-0677">Repeat</keyword>
<keyword id="KW-0732">Signal</keyword>
<keyword id="KW-0812">Transmembrane</keyword>
<keyword id="KW-1133">Transmembrane helix</keyword>
<keyword id="KW-0813">Transport</keyword>
<protein>
    <recommendedName>
        <fullName>Vacuolar protein sorting/targeting protein 10</fullName>
    </recommendedName>
    <alternativeName>
        <fullName>Carboxypeptidase Y receptor</fullName>
        <shortName>CPY receptor</shortName>
    </alternativeName>
    <alternativeName>
        <fullName>Sortilin vps10</fullName>
    </alternativeName>
    <alternativeName>
        <fullName>Vacuolar carboxypeptidase sorting receptor vps10</fullName>
    </alternativeName>
</protein>
<evidence type="ECO:0000250" key="1"/>
<evidence type="ECO:0000255" key="2"/>
<evidence type="ECO:0000269" key="3">
    <source>
    </source>
</evidence>
<evidence type="ECO:0000305" key="4"/>
<sequence length="1466" mass="165062">MFFLTKILPLRGRIFPMFGCLLLIVSLITGCIASPAAEVAETVFDSKPVDFMTFKDSTNTLFLNAEFGDVYLSQDNGQSWRNGVISGQVCPIKKLIKHSFENSRVFALTECDTVYYSYDNGENWDYFTIDHPISITQLPFHFHAKNPDYVIFNNQYCSSSGTWVGKICKPDLYYTKDGFQSDPEPMPVGSSYCIFADSSEKMVVSSEEQIICISLNPNSAARPPFSHHIVYSDDWFQSIVPVQLHNFLGSDGAYGILSTGSFLVAALIDAATRKLFVYVSQDGYYWEEALKFHKGFEFDAFTILPSTEYSFFIDSLDSHPNNPTGILYSLDSESNTFVIRQMNTNRYVDGYTDFMLIDYLDGLQFVNVVENVDEIEVDPQVDKVLSSRITFDGGKTWSTVASPESSCNSMKQCSLHLFLDPHVSHASIASSKFAPGILLASGSVGDRLLSENQMDLFVSEDGGRNWTLSRDGMHLFAMSGFGSIFFASEYLDVINEVYYSLDHGQSWVTVTLDKTIVPIKLFASEDPYAEIFYLLAMTDDGEQSNYSLFSFNFGKFLPKECQFSNSESNKNDFEKWYTRYANGSPICSEMGKKEFFWRKKATSVCSVPKSITDLHGSFDACECTDEDYECNTQFISNDQGECKLLDFIGSLLCASEDLDTFQKIPYRLVPGNKCTPNKRDSHREPQTFNCDSFNEPGTEITSFLYDFDEKIVDVVYLEGTVPEENTFLIGISVNSHVYFSEDEGKTWDKFSKEEFSSVLPHAYNKNSVYMVTSKNIVYFTTNRGKNFYKFKAPSPPNQNGKSLFSFHPSRPAWLLYAGSENCEKNPFADDCRDVVFVSLDFGDTWSRLPSNLEYCSWAKAEKLVVDDTLIFCIRQNTNDPFKKELISSIDFFEYEQDEILNDVVGFMIEDEYVIVAVQDEEGTSLSLDVSINGLNFASCSFPAYLNVHPKQAYTILDSQTHSLFIHVTTNTHLGSEWGDILKSNSNGTYFMTSLANVNRDSVGYVDFERLEGIQGIALANIVSNTKELTDGGTKKLQTLITFNDGLDWSYLNLVGGEKIVPKCGKNCYLHLHGYTERNQFSDPTSTNAAVGLIIGVGSFSPFLIPYEESQTFISRDAGVTWYRIFDSPHLWAFLDSGSIIIAVESISPTNVIKYSADEGRTWQEYQFSEKSKVVVDVSTKPSGVGHQVLLLTTDDENAPISSVLIDFDALYRRTCVFDEENSEESDFVRWVPTDISGKPLCLRGRISSFYRKSIHKKCRVGSSLLVKEEVLSKCECTRADFECDYNYRRLKDGTCVLVSGLQPPDTREEQCSVDDAFEWRQPTGYKRTPLTECEGGVPLDAGTLHPCPGKEDDYYKAHPKPGGWSIFLTIIFSILLAAVAGCILYYYSRRFLKGAIRLGSDSATENPLESGISYTRGAFSSIPIFFSALYQSVRSLFIRSTPTNGEFENAAFLQNYEIDDDDEESV</sequence>
<dbReference type="EMBL" id="CU329671">
    <property type="protein sequence ID" value="CAA16914.1"/>
    <property type="molecule type" value="Genomic_DNA"/>
</dbReference>
<dbReference type="PIR" id="T39557">
    <property type="entry name" value="T39557"/>
</dbReference>
<dbReference type="RefSeq" id="NP_596804.1">
    <property type="nucleotide sequence ID" value="NM_001023825.2"/>
</dbReference>
<dbReference type="SMR" id="O42930"/>
<dbReference type="BioGRID" id="276408">
    <property type="interactions" value="6"/>
</dbReference>
<dbReference type="FunCoup" id="O42930">
    <property type="interactions" value="151"/>
</dbReference>
<dbReference type="STRING" id="284812.O42930"/>
<dbReference type="GlyCosmos" id="O42930">
    <property type="glycosylation" value="3 sites, No reported glycans"/>
</dbReference>
<dbReference type="iPTMnet" id="O42930"/>
<dbReference type="PaxDb" id="4896-SPBC16C6.06.1"/>
<dbReference type="EnsemblFungi" id="SPBC16C6.06.1">
    <property type="protein sequence ID" value="SPBC16C6.06.1:pep"/>
    <property type="gene ID" value="SPBC16C6.06"/>
</dbReference>
<dbReference type="GeneID" id="2539861"/>
<dbReference type="KEGG" id="spo:2539861"/>
<dbReference type="PomBase" id="SPBC16C6.06">
    <property type="gene designation" value="vps10"/>
</dbReference>
<dbReference type="VEuPathDB" id="FungiDB:SPBC16C6.06"/>
<dbReference type="eggNOG" id="KOG3511">
    <property type="taxonomic scope" value="Eukaryota"/>
</dbReference>
<dbReference type="HOGENOM" id="CLU_000700_0_0_1"/>
<dbReference type="InParanoid" id="O42930"/>
<dbReference type="OMA" id="ATMSEFI"/>
<dbReference type="PhylomeDB" id="O42930"/>
<dbReference type="PRO" id="PR:O42930"/>
<dbReference type="Proteomes" id="UP000002485">
    <property type="component" value="Chromosome II"/>
</dbReference>
<dbReference type="GO" id="GO:0005829">
    <property type="term" value="C:cytosol"/>
    <property type="evidence" value="ECO:0007669"/>
    <property type="project" value="GOC"/>
</dbReference>
<dbReference type="GO" id="GO:0005794">
    <property type="term" value="C:Golgi apparatus"/>
    <property type="evidence" value="ECO:0000314"/>
    <property type="project" value="PomBase"/>
</dbReference>
<dbReference type="GO" id="GO:0005770">
    <property type="term" value="C:late endosome"/>
    <property type="evidence" value="ECO:0000314"/>
    <property type="project" value="PomBase"/>
</dbReference>
<dbReference type="GO" id="GO:0016020">
    <property type="term" value="C:membrane"/>
    <property type="evidence" value="ECO:0000318"/>
    <property type="project" value="GO_Central"/>
</dbReference>
<dbReference type="GO" id="GO:0005802">
    <property type="term" value="C:trans-Golgi network"/>
    <property type="evidence" value="ECO:0000314"/>
    <property type="project" value="PomBase"/>
</dbReference>
<dbReference type="GO" id="GO:0000166">
    <property type="term" value="F:nucleotide binding"/>
    <property type="evidence" value="ECO:0007669"/>
    <property type="project" value="UniProtKB-KW"/>
</dbReference>
<dbReference type="GO" id="GO:0010209">
    <property type="term" value="F:vacuolar sorting signal binding"/>
    <property type="evidence" value="ECO:0000266"/>
    <property type="project" value="PomBase"/>
</dbReference>
<dbReference type="GO" id="GO:0006895">
    <property type="term" value="P:Golgi to endosome transport"/>
    <property type="evidence" value="ECO:0000315"/>
    <property type="project" value="PomBase"/>
</dbReference>
<dbReference type="GO" id="GO:0006896">
    <property type="term" value="P:Golgi to vacuole transport"/>
    <property type="evidence" value="ECO:0000315"/>
    <property type="project" value="PomBase"/>
</dbReference>
<dbReference type="GO" id="GO:0006623">
    <property type="term" value="P:protein targeting to vacuole"/>
    <property type="evidence" value="ECO:0000318"/>
    <property type="project" value="GO_Central"/>
</dbReference>
<dbReference type="CDD" id="cd15482">
    <property type="entry name" value="Sialidase_non-viral"/>
    <property type="match status" value="1"/>
</dbReference>
<dbReference type="FunFam" id="3.30.60.270:FF:000005">
    <property type="entry name" value="Sortilin"/>
    <property type="match status" value="1"/>
</dbReference>
<dbReference type="Gene3D" id="3.30.60.270">
    <property type="match status" value="2"/>
</dbReference>
<dbReference type="Gene3D" id="2.130.10.10">
    <property type="entry name" value="YVTN repeat-like/Quinoprotein amine dehydrogenase"/>
    <property type="match status" value="3"/>
</dbReference>
<dbReference type="InterPro" id="IPR031777">
    <property type="entry name" value="Sortilin_C"/>
</dbReference>
<dbReference type="InterPro" id="IPR031778">
    <property type="entry name" value="Sortilin_N"/>
</dbReference>
<dbReference type="InterPro" id="IPR006581">
    <property type="entry name" value="VPS10"/>
</dbReference>
<dbReference type="InterPro" id="IPR050310">
    <property type="entry name" value="VPS10-sortilin"/>
</dbReference>
<dbReference type="InterPro" id="IPR015943">
    <property type="entry name" value="WD40/YVTN_repeat-like_dom_sf"/>
</dbReference>
<dbReference type="PANTHER" id="PTHR12106">
    <property type="entry name" value="SORTILIN RELATED"/>
    <property type="match status" value="1"/>
</dbReference>
<dbReference type="PANTHER" id="PTHR12106:SF27">
    <property type="entry name" value="SORTILIN-RELATED RECEPTOR"/>
    <property type="match status" value="1"/>
</dbReference>
<dbReference type="Pfam" id="PF15902">
    <property type="entry name" value="Sortilin-Vps10"/>
    <property type="match status" value="2"/>
</dbReference>
<dbReference type="Pfam" id="PF15901">
    <property type="entry name" value="Sortilin_C"/>
    <property type="match status" value="2"/>
</dbReference>
<dbReference type="SMART" id="SM00602">
    <property type="entry name" value="VPS10"/>
    <property type="match status" value="2"/>
</dbReference>
<dbReference type="SUPFAM" id="SSF110296">
    <property type="entry name" value="Oligoxyloglucan reducing end-specific cellobiohydrolase"/>
    <property type="match status" value="2"/>
</dbReference>
<name>VPS10_SCHPO</name>
<reference key="1">
    <citation type="journal article" date="2002" name="Nature">
        <title>The genome sequence of Schizosaccharomyces pombe.</title>
        <authorList>
            <person name="Wood V."/>
            <person name="Gwilliam R."/>
            <person name="Rajandream M.A."/>
            <person name="Lyne M.H."/>
            <person name="Lyne R."/>
            <person name="Stewart A."/>
            <person name="Sgouros J.G."/>
            <person name="Peat N."/>
            <person name="Hayles J."/>
            <person name="Baker S.G."/>
            <person name="Basham D."/>
            <person name="Bowman S."/>
            <person name="Brooks K."/>
            <person name="Brown D."/>
            <person name="Brown S."/>
            <person name="Chillingworth T."/>
            <person name="Churcher C.M."/>
            <person name="Collins M."/>
            <person name="Connor R."/>
            <person name="Cronin A."/>
            <person name="Davis P."/>
            <person name="Feltwell T."/>
            <person name="Fraser A."/>
            <person name="Gentles S."/>
            <person name="Goble A."/>
            <person name="Hamlin N."/>
            <person name="Harris D.E."/>
            <person name="Hidalgo J."/>
            <person name="Hodgson G."/>
            <person name="Holroyd S."/>
            <person name="Hornsby T."/>
            <person name="Howarth S."/>
            <person name="Huckle E.J."/>
            <person name="Hunt S."/>
            <person name="Jagels K."/>
            <person name="James K.D."/>
            <person name="Jones L."/>
            <person name="Jones M."/>
            <person name="Leather S."/>
            <person name="McDonald S."/>
            <person name="McLean J."/>
            <person name="Mooney P."/>
            <person name="Moule S."/>
            <person name="Mungall K.L."/>
            <person name="Murphy L.D."/>
            <person name="Niblett D."/>
            <person name="Odell C."/>
            <person name="Oliver K."/>
            <person name="O'Neil S."/>
            <person name="Pearson D."/>
            <person name="Quail M.A."/>
            <person name="Rabbinowitsch E."/>
            <person name="Rutherford K.M."/>
            <person name="Rutter S."/>
            <person name="Saunders D."/>
            <person name="Seeger K."/>
            <person name="Sharp S."/>
            <person name="Skelton J."/>
            <person name="Simmonds M.N."/>
            <person name="Squares R."/>
            <person name="Squares S."/>
            <person name="Stevens K."/>
            <person name="Taylor K."/>
            <person name="Taylor R.G."/>
            <person name="Tivey A."/>
            <person name="Walsh S.V."/>
            <person name="Warren T."/>
            <person name="Whitehead S."/>
            <person name="Woodward J.R."/>
            <person name="Volckaert G."/>
            <person name="Aert R."/>
            <person name="Robben J."/>
            <person name="Grymonprez B."/>
            <person name="Weltjens I."/>
            <person name="Vanstreels E."/>
            <person name="Rieger M."/>
            <person name="Schaefer M."/>
            <person name="Mueller-Auer S."/>
            <person name="Gabel C."/>
            <person name="Fuchs M."/>
            <person name="Duesterhoeft A."/>
            <person name="Fritzc C."/>
            <person name="Holzer E."/>
            <person name="Moestl D."/>
            <person name="Hilbert H."/>
            <person name="Borzym K."/>
            <person name="Langer I."/>
            <person name="Beck A."/>
            <person name="Lehrach H."/>
            <person name="Reinhardt R."/>
            <person name="Pohl T.M."/>
            <person name="Eger P."/>
            <person name="Zimmermann W."/>
            <person name="Wedler H."/>
            <person name="Wambutt R."/>
            <person name="Purnelle B."/>
            <person name="Goffeau A."/>
            <person name="Cadieu E."/>
            <person name="Dreano S."/>
            <person name="Gloux S."/>
            <person name="Lelaure V."/>
            <person name="Mottier S."/>
            <person name="Galibert F."/>
            <person name="Aves S.J."/>
            <person name="Xiang Z."/>
            <person name="Hunt C."/>
            <person name="Moore K."/>
            <person name="Hurst S.M."/>
            <person name="Lucas M."/>
            <person name="Rochet M."/>
            <person name="Gaillardin C."/>
            <person name="Tallada V.A."/>
            <person name="Garzon A."/>
            <person name="Thode G."/>
            <person name="Daga R.R."/>
            <person name="Cruzado L."/>
            <person name="Jimenez J."/>
            <person name="Sanchez M."/>
            <person name="del Rey F."/>
            <person name="Benito J."/>
            <person name="Dominguez A."/>
            <person name="Revuelta J.L."/>
            <person name="Moreno S."/>
            <person name="Armstrong J."/>
            <person name="Forsburg S.L."/>
            <person name="Cerutti L."/>
            <person name="Lowe T."/>
            <person name="McCombie W.R."/>
            <person name="Paulsen I."/>
            <person name="Potashkin J."/>
            <person name="Shpakovski G.V."/>
            <person name="Ussery D."/>
            <person name="Barrell B.G."/>
            <person name="Nurse P."/>
        </authorList>
    </citation>
    <scope>NUCLEOTIDE SEQUENCE [LARGE SCALE GENOMIC DNA]</scope>
    <source>
        <strain>972 / ATCC 24843</strain>
    </source>
</reference>
<reference key="2">
    <citation type="journal article" date="2006" name="Microbiology">
        <title>Vacuolar protein sorting receptor in Schizosaccharomyces pombe.</title>
        <authorList>
            <person name="Iwaki T."/>
            <person name="Hosomi A."/>
            <person name="Tokudomi S."/>
            <person name="Kusunoki Y."/>
            <person name="Fujita Y."/>
            <person name="Giga-Hama Y."/>
            <person name="Tanaka N."/>
            <person name="Takegawa K."/>
        </authorList>
    </citation>
    <scope>FUNCTION</scope>
    <scope>SUBCELLULAR LOCATION</scope>
    <scope>MUTAGENESIS OF PHE-1419; PHE-1425 AND PHE-1426</scope>
</reference>
<comment type="function">
    <text evidence="3">Functions as a sorting receptor in the Golgi compartment required for the intracellular sorting and delivery of soluble vacuolar proteins, like carboxypeptidase Y (CPY) and proteinase A. Executes multiple rounds of sorting by cycling between the late Golgi and a prevacuolar endosome-like compartment.</text>
</comment>
<comment type="subcellular location">
    <subcellularLocation>
        <location evidence="3">Golgi apparatus</location>
        <location evidence="3">trans-Golgi network membrane</location>
        <topology evidence="3">Single-pass type I membrane protein</topology>
    </subcellularLocation>
    <subcellularLocation>
        <location evidence="1">Prevacuolar compartment membrane</location>
        <topology evidence="1">Single-pass type I membrane protein</topology>
    </subcellularLocation>
    <text evidence="1">Cycles between the Golgi apparatus and the prevacuolar compartment.</text>
</comment>
<comment type="similarity">
    <text evidence="4">Belongs to the VPS10-related sortilin family.</text>
</comment>